<accession>A4Y1B7</accession>
<feature type="chain" id="PRO_1000067408" description="Xaa-Pro dipeptidase">
    <location>
        <begin position="1"/>
        <end position="440"/>
    </location>
</feature>
<feature type="binding site" evidence="1">
    <location>
        <position position="244"/>
    </location>
    <ligand>
        <name>Mn(2+)</name>
        <dbReference type="ChEBI" id="CHEBI:29035"/>
        <label>2</label>
    </ligand>
</feature>
<feature type="binding site" evidence="1">
    <location>
        <position position="255"/>
    </location>
    <ligand>
        <name>Mn(2+)</name>
        <dbReference type="ChEBI" id="CHEBI:29035"/>
        <label>1</label>
    </ligand>
</feature>
<feature type="binding site" evidence="1">
    <location>
        <position position="255"/>
    </location>
    <ligand>
        <name>Mn(2+)</name>
        <dbReference type="ChEBI" id="CHEBI:29035"/>
        <label>2</label>
    </ligand>
</feature>
<feature type="binding site" evidence="1">
    <location>
        <position position="335"/>
    </location>
    <ligand>
        <name>Mn(2+)</name>
        <dbReference type="ChEBI" id="CHEBI:29035"/>
        <label>1</label>
    </ligand>
</feature>
<feature type="binding site" evidence="1">
    <location>
        <position position="380"/>
    </location>
    <ligand>
        <name>Mn(2+)</name>
        <dbReference type="ChEBI" id="CHEBI:29035"/>
        <label>1</label>
    </ligand>
</feature>
<feature type="binding site" evidence="1">
    <location>
        <position position="419"/>
    </location>
    <ligand>
        <name>Mn(2+)</name>
        <dbReference type="ChEBI" id="CHEBI:29035"/>
        <label>1</label>
    </ligand>
</feature>
<feature type="binding site" evidence="1">
    <location>
        <position position="419"/>
    </location>
    <ligand>
        <name>Mn(2+)</name>
        <dbReference type="ChEBI" id="CHEBI:29035"/>
        <label>2</label>
    </ligand>
</feature>
<name>PEPQ_SHEPC</name>
<gene>
    <name evidence="1" type="primary">pepQ</name>
    <name type="ordered locus">Sputcn32_0014</name>
</gene>
<comment type="function">
    <text evidence="1">Splits dipeptides with a prolyl residue in the C-terminal position.</text>
</comment>
<comment type="catalytic activity">
    <reaction evidence="1">
        <text>Xaa-L-Pro dipeptide + H2O = an L-alpha-amino acid + L-proline</text>
        <dbReference type="Rhea" id="RHEA:76407"/>
        <dbReference type="ChEBI" id="CHEBI:15377"/>
        <dbReference type="ChEBI" id="CHEBI:59869"/>
        <dbReference type="ChEBI" id="CHEBI:60039"/>
        <dbReference type="ChEBI" id="CHEBI:195196"/>
        <dbReference type="EC" id="3.4.13.9"/>
    </reaction>
</comment>
<comment type="cofactor">
    <cofactor evidence="1">
        <name>Mn(2+)</name>
        <dbReference type="ChEBI" id="CHEBI:29035"/>
    </cofactor>
    <text evidence="1">Binds 2 manganese ions per subunit.</text>
</comment>
<comment type="similarity">
    <text evidence="1">Belongs to the peptidase M24B family. Bacterial-type prolidase subfamily.</text>
</comment>
<protein>
    <recommendedName>
        <fullName evidence="1">Xaa-Pro dipeptidase</fullName>
        <shortName evidence="1">X-Pro dipeptidase</shortName>
        <ecNumber evidence="1">3.4.13.9</ecNumber>
    </recommendedName>
    <alternativeName>
        <fullName evidence="1">Imidodipeptidase</fullName>
    </alternativeName>
    <alternativeName>
        <fullName evidence="1">Proline dipeptidase</fullName>
        <shortName evidence="1">Prolidase</shortName>
    </alternativeName>
</protein>
<keyword id="KW-0224">Dipeptidase</keyword>
<keyword id="KW-0378">Hydrolase</keyword>
<keyword id="KW-0464">Manganese</keyword>
<keyword id="KW-0479">Metal-binding</keyword>
<keyword id="KW-0482">Metalloprotease</keyword>
<keyword id="KW-0645">Protease</keyword>
<sequence length="440" mass="49997">MDQLAHHYRAHIAELNRRVAEILSREALSGLVIHSGQPHRMFLDDINYPFKANPHFKAWLPVLDNPNCWLVVNGRDKPQLIFYRPVDFWHKVSDVPDMFWTEHFDIKLLTKADKVAELLPKDTVNWAYLGEHLDVAEVLGFTSRNPDAVMSYLHYHRTTKTEYELECMRRANQIAVQGHLAAKNAFYNGASEFEIQQHYLSAVGQSENEVPYGNIIALNQNAAILHYTALEHQSPAKRLSFLIDAGASYFGYASDITRTYAFEKNRFDELIAAMNKAQLELIDMMRPGVRYPDLHLATHAKVAQMLLDFDLATGDAQGLVDQGITSAFFPHGLGHMLGLQVHDVGGFSHDERGTHIAAPEAHPFLRCTRILAPNQVLTMEPGLYIIDTLLNELKQDSRGLQINWQTVDELRPFGGIRIEDNVIVHQDRNENMTRELGLAD</sequence>
<evidence type="ECO:0000255" key="1">
    <source>
        <dbReference type="HAMAP-Rule" id="MF_01279"/>
    </source>
</evidence>
<organism>
    <name type="scientific">Shewanella putrefaciens (strain CN-32 / ATCC BAA-453)</name>
    <dbReference type="NCBI Taxonomy" id="319224"/>
    <lineage>
        <taxon>Bacteria</taxon>
        <taxon>Pseudomonadati</taxon>
        <taxon>Pseudomonadota</taxon>
        <taxon>Gammaproteobacteria</taxon>
        <taxon>Alteromonadales</taxon>
        <taxon>Shewanellaceae</taxon>
        <taxon>Shewanella</taxon>
    </lineage>
</organism>
<dbReference type="EC" id="3.4.13.9" evidence="1"/>
<dbReference type="EMBL" id="CP000681">
    <property type="protein sequence ID" value="ABP73750.1"/>
    <property type="molecule type" value="Genomic_DNA"/>
</dbReference>
<dbReference type="SMR" id="A4Y1B7"/>
<dbReference type="STRING" id="319224.Sputcn32_0014"/>
<dbReference type="MEROPS" id="M24.003"/>
<dbReference type="KEGG" id="spc:Sputcn32_0014"/>
<dbReference type="eggNOG" id="COG0006">
    <property type="taxonomic scope" value="Bacteria"/>
</dbReference>
<dbReference type="HOGENOM" id="CLU_050675_0_0_6"/>
<dbReference type="GO" id="GO:0005829">
    <property type="term" value="C:cytosol"/>
    <property type="evidence" value="ECO:0007669"/>
    <property type="project" value="TreeGrafter"/>
</dbReference>
<dbReference type="GO" id="GO:0004177">
    <property type="term" value="F:aminopeptidase activity"/>
    <property type="evidence" value="ECO:0007669"/>
    <property type="project" value="TreeGrafter"/>
</dbReference>
<dbReference type="GO" id="GO:0046872">
    <property type="term" value="F:metal ion binding"/>
    <property type="evidence" value="ECO:0007669"/>
    <property type="project" value="UniProtKB-KW"/>
</dbReference>
<dbReference type="GO" id="GO:0008235">
    <property type="term" value="F:metalloexopeptidase activity"/>
    <property type="evidence" value="ECO:0007669"/>
    <property type="project" value="UniProtKB-UniRule"/>
</dbReference>
<dbReference type="GO" id="GO:0016795">
    <property type="term" value="F:phosphoric triester hydrolase activity"/>
    <property type="evidence" value="ECO:0007669"/>
    <property type="project" value="InterPro"/>
</dbReference>
<dbReference type="GO" id="GO:0102009">
    <property type="term" value="F:proline dipeptidase activity"/>
    <property type="evidence" value="ECO:0007669"/>
    <property type="project" value="UniProtKB-EC"/>
</dbReference>
<dbReference type="GO" id="GO:0006508">
    <property type="term" value="P:proteolysis"/>
    <property type="evidence" value="ECO:0007669"/>
    <property type="project" value="UniProtKB-KW"/>
</dbReference>
<dbReference type="CDD" id="cd01087">
    <property type="entry name" value="Prolidase"/>
    <property type="match status" value="1"/>
</dbReference>
<dbReference type="Gene3D" id="3.90.230.10">
    <property type="entry name" value="Creatinase/methionine aminopeptidase superfamily"/>
    <property type="match status" value="1"/>
</dbReference>
<dbReference type="Gene3D" id="3.40.350.10">
    <property type="entry name" value="Creatinase/prolidase N-terminal domain"/>
    <property type="match status" value="1"/>
</dbReference>
<dbReference type="HAMAP" id="MF_01279">
    <property type="entry name" value="X_Pro_dipeptid"/>
    <property type="match status" value="1"/>
</dbReference>
<dbReference type="InterPro" id="IPR029149">
    <property type="entry name" value="Creatin/AminoP/Spt16_N"/>
</dbReference>
<dbReference type="InterPro" id="IPR036005">
    <property type="entry name" value="Creatinase/aminopeptidase-like"/>
</dbReference>
<dbReference type="InterPro" id="IPR048819">
    <property type="entry name" value="PepQ_N"/>
</dbReference>
<dbReference type="InterPro" id="IPR000994">
    <property type="entry name" value="Pept_M24"/>
</dbReference>
<dbReference type="InterPro" id="IPR001131">
    <property type="entry name" value="Peptidase_M24B_aminopep-P_CS"/>
</dbReference>
<dbReference type="InterPro" id="IPR052433">
    <property type="entry name" value="X-Pro_dipept-like"/>
</dbReference>
<dbReference type="InterPro" id="IPR022846">
    <property type="entry name" value="X_Pro_dipept"/>
</dbReference>
<dbReference type="NCBIfam" id="NF010133">
    <property type="entry name" value="PRK13607.1"/>
    <property type="match status" value="1"/>
</dbReference>
<dbReference type="PANTHER" id="PTHR43226">
    <property type="entry name" value="XAA-PRO AMINOPEPTIDASE 3"/>
    <property type="match status" value="1"/>
</dbReference>
<dbReference type="PANTHER" id="PTHR43226:SF8">
    <property type="entry name" value="XAA-PRO DIPEPTIDASE"/>
    <property type="match status" value="1"/>
</dbReference>
<dbReference type="Pfam" id="PF21216">
    <property type="entry name" value="PepQ_N"/>
    <property type="match status" value="1"/>
</dbReference>
<dbReference type="Pfam" id="PF00557">
    <property type="entry name" value="Peptidase_M24"/>
    <property type="match status" value="1"/>
</dbReference>
<dbReference type="SUPFAM" id="SSF55920">
    <property type="entry name" value="Creatinase/aminopeptidase"/>
    <property type="match status" value="1"/>
</dbReference>
<dbReference type="SUPFAM" id="SSF53092">
    <property type="entry name" value="Creatinase/prolidase N-terminal domain"/>
    <property type="match status" value="1"/>
</dbReference>
<dbReference type="PROSITE" id="PS00491">
    <property type="entry name" value="PROLINE_PEPTIDASE"/>
    <property type="match status" value="1"/>
</dbReference>
<proteinExistence type="inferred from homology"/>
<reference key="1">
    <citation type="submission" date="2007-04" db="EMBL/GenBank/DDBJ databases">
        <title>Complete sequence of Shewanella putrefaciens CN-32.</title>
        <authorList>
            <consortium name="US DOE Joint Genome Institute"/>
            <person name="Copeland A."/>
            <person name="Lucas S."/>
            <person name="Lapidus A."/>
            <person name="Barry K."/>
            <person name="Detter J.C."/>
            <person name="Glavina del Rio T."/>
            <person name="Hammon N."/>
            <person name="Israni S."/>
            <person name="Dalin E."/>
            <person name="Tice H."/>
            <person name="Pitluck S."/>
            <person name="Chain P."/>
            <person name="Malfatti S."/>
            <person name="Shin M."/>
            <person name="Vergez L."/>
            <person name="Schmutz J."/>
            <person name="Larimer F."/>
            <person name="Land M."/>
            <person name="Hauser L."/>
            <person name="Kyrpides N."/>
            <person name="Mikhailova N."/>
            <person name="Romine M.F."/>
            <person name="Fredrickson J."/>
            <person name="Tiedje J."/>
            <person name="Richardson P."/>
        </authorList>
    </citation>
    <scope>NUCLEOTIDE SEQUENCE [LARGE SCALE GENOMIC DNA]</scope>
    <source>
        <strain>CN-32 / ATCC BAA-453</strain>
    </source>
</reference>